<name>TRUB_CORJK</name>
<dbReference type="EC" id="5.4.99.25" evidence="1"/>
<dbReference type="EMBL" id="CR931997">
    <property type="protein sequence ID" value="CAI37301.1"/>
    <property type="molecule type" value="Genomic_DNA"/>
</dbReference>
<dbReference type="RefSeq" id="WP_011273678.1">
    <property type="nucleotide sequence ID" value="NC_007164.1"/>
</dbReference>
<dbReference type="SMR" id="Q4JV56"/>
<dbReference type="STRING" id="306537.jk1137"/>
<dbReference type="GeneID" id="92738656"/>
<dbReference type="KEGG" id="cjk:jk1137"/>
<dbReference type="eggNOG" id="COG0130">
    <property type="taxonomic scope" value="Bacteria"/>
</dbReference>
<dbReference type="HOGENOM" id="CLU_032087_0_0_11"/>
<dbReference type="OrthoDB" id="9802309at2"/>
<dbReference type="Proteomes" id="UP000000545">
    <property type="component" value="Chromosome"/>
</dbReference>
<dbReference type="GO" id="GO:0003723">
    <property type="term" value="F:RNA binding"/>
    <property type="evidence" value="ECO:0007669"/>
    <property type="project" value="InterPro"/>
</dbReference>
<dbReference type="GO" id="GO:0160148">
    <property type="term" value="F:tRNA pseudouridine(55) synthase activity"/>
    <property type="evidence" value="ECO:0007669"/>
    <property type="project" value="UniProtKB-EC"/>
</dbReference>
<dbReference type="GO" id="GO:1990481">
    <property type="term" value="P:mRNA pseudouridine synthesis"/>
    <property type="evidence" value="ECO:0007669"/>
    <property type="project" value="TreeGrafter"/>
</dbReference>
<dbReference type="GO" id="GO:0031119">
    <property type="term" value="P:tRNA pseudouridine synthesis"/>
    <property type="evidence" value="ECO:0007669"/>
    <property type="project" value="UniProtKB-UniRule"/>
</dbReference>
<dbReference type="CDD" id="cd02573">
    <property type="entry name" value="PseudoU_synth_EcTruB"/>
    <property type="match status" value="1"/>
</dbReference>
<dbReference type="Gene3D" id="3.30.2350.10">
    <property type="entry name" value="Pseudouridine synthase"/>
    <property type="match status" value="1"/>
</dbReference>
<dbReference type="Gene3D" id="2.30.130.10">
    <property type="entry name" value="PUA domain"/>
    <property type="match status" value="1"/>
</dbReference>
<dbReference type="HAMAP" id="MF_01080">
    <property type="entry name" value="TruB_bact"/>
    <property type="match status" value="1"/>
</dbReference>
<dbReference type="InterPro" id="IPR012960">
    <property type="entry name" value="Dyskerin-like"/>
</dbReference>
<dbReference type="InterPro" id="IPR020103">
    <property type="entry name" value="PsdUridine_synth_cat_dom_sf"/>
</dbReference>
<dbReference type="InterPro" id="IPR002501">
    <property type="entry name" value="PsdUridine_synth_N"/>
</dbReference>
<dbReference type="InterPro" id="IPR015947">
    <property type="entry name" value="PUA-like_sf"/>
</dbReference>
<dbReference type="InterPro" id="IPR036974">
    <property type="entry name" value="PUA_sf"/>
</dbReference>
<dbReference type="InterPro" id="IPR015225">
    <property type="entry name" value="tRNA_psdUridine_synth_fam2_C"/>
</dbReference>
<dbReference type="InterPro" id="IPR014780">
    <property type="entry name" value="tRNA_psdUridine_synth_TruB"/>
</dbReference>
<dbReference type="InterPro" id="IPR032819">
    <property type="entry name" value="TruB_C"/>
</dbReference>
<dbReference type="NCBIfam" id="TIGR00431">
    <property type="entry name" value="TruB"/>
    <property type="match status" value="1"/>
</dbReference>
<dbReference type="PANTHER" id="PTHR13767:SF2">
    <property type="entry name" value="PSEUDOURIDYLATE SYNTHASE TRUB1"/>
    <property type="match status" value="1"/>
</dbReference>
<dbReference type="PANTHER" id="PTHR13767">
    <property type="entry name" value="TRNA-PSEUDOURIDINE SYNTHASE"/>
    <property type="match status" value="1"/>
</dbReference>
<dbReference type="Pfam" id="PF09142">
    <property type="entry name" value="TruB_C"/>
    <property type="match status" value="1"/>
</dbReference>
<dbReference type="Pfam" id="PF16198">
    <property type="entry name" value="TruB_C_2"/>
    <property type="match status" value="1"/>
</dbReference>
<dbReference type="Pfam" id="PF01509">
    <property type="entry name" value="TruB_N"/>
    <property type="match status" value="1"/>
</dbReference>
<dbReference type="SMART" id="SM01136">
    <property type="entry name" value="DKCLD"/>
    <property type="match status" value="1"/>
</dbReference>
<dbReference type="SUPFAM" id="SSF55120">
    <property type="entry name" value="Pseudouridine synthase"/>
    <property type="match status" value="1"/>
</dbReference>
<dbReference type="SUPFAM" id="SSF88697">
    <property type="entry name" value="PUA domain-like"/>
    <property type="match status" value="1"/>
</dbReference>
<proteinExistence type="inferred from homology"/>
<evidence type="ECO:0000255" key="1">
    <source>
        <dbReference type="HAMAP-Rule" id="MF_01080"/>
    </source>
</evidence>
<accession>Q4JV56</accession>
<reference key="1">
    <citation type="journal article" date="2005" name="J. Bacteriol.">
        <title>Complete genome sequence and analysis of the multiresistant nosocomial pathogen Corynebacterium jeikeium K411, a lipid-requiring bacterium of the human skin flora.</title>
        <authorList>
            <person name="Tauch A."/>
            <person name="Kaiser O."/>
            <person name="Hain T."/>
            <person name="Goesmann A."/>
            <person name="Weisshaar B."/>
            <person name="Albersmeier A."/>
            <person name="Bekel T."/>
            <person name="Bischoff N."/>
            <person name="Brune I."/>
            <person name="Chakraborty T."/>
            <person name="Kalinowski J."/>
            <person name="Meyer F."/>
            <person name="Rupp O."/>
            <person name="Schneiker S."/>
            <person name="Viehoever P."/>
            <person name="Puehler A."/>
        </authorList>
    </citation>
    <scope>NUCLEOTIDE SEQUENCE [LARGE SCALE GENOMIC DNA]</scope>
    <source>
        <strain>K411</strain>
    </source>
</reference>
<organism>
    <name type="scientific">Corynebacterium jeikeium (strain K411)</name>
    <dbReference type="NCBI Taxonomy" id="306537"/>
    <lineage>
        <taxon>Bacteria</taxon>
        <taxon>Bacillati</taxon>
        <taxon>Actinomycetota</taxon>
        <taxon>Actinomycetes</taxon>
        <taxon>Mycobacteriales</taxon>
        <taxon>Corynebacteriaceae</taxon>
        <taxon>Corynebacterium</taxon>
    </lineage>
</organism>
<keyword id="KW-0413">Isomerase</keyword>
<keyword id="KW-1185">Reference proteome</keyword>
<keyword id="KW-0819">tRNA processing</keyword>
<protein>
    <recommendedName>
        <fullName evidence="1">tRNA pseudouridine synthase B</fullName>
        <ecNumber evidence="1">5.4.99.25</ecNumber>
    </recommendedName>
    <alternativeName>
        <fullName evidence="1">tRNA pseudouridine(55) synthase</fullName>
        <shortName evidence="1">Psi55 synthase</shortName>
    </alternativeName>
    <alternativeName>
        <fullName evidence="1">tRNA pseudouridylate synthase</fullName>
    </alternativeName>
    <alternativeName>
        <fullName evidence="1">tRNA-uridine isomerase</fullName>
    </alternativeName>
</protein>
<sequence>MNQRSARSVLSRSGVVLVDKPSGPTSHDMVAKLRRIMGTRRIGHSGTLDPMATGLLVVGVERGTKFLAHVVTHDKRYEATVRLGVATHTDDAQGDVLSTASPQDLQALTEQQVREAFAAQRGDIMQRPTSVSSIKIDGKRAHELVREGHDVVLPERPVTIFSLEVLDVVVDDATSCIDARISVHCSSGTYIRAIARDVGEALGVGGHLTQLRRTSVGPFDVSEARTLEQLEEDPSLTLNLDEAMVRCFDTREISESEGVDLSLGKWLKPVGNKGVRAAVTPSGQAIALVEEKGKRASSVFVARPAGMD</sequence>
<gene>
    <name evidence="1" type="primary">truB</name>
    <name type="ordered locus">jk1137</name>
</gene>
<comment type="function">
    <text evidence="1">Responsible for synthesis of pseudouridine from uracil-55 in the psi GC loop of transfer RNAs.</text>
</comment>
<comment type="catalytic activity">
    <reaction evidence="1">
        <text>uridine(55) in tRNA = pseudouridine(55) in tRNA</text>
        <dbReference type="Rhea" id="RHEA:42532"/>
        <dbReference type="Rhea" id="RHEA-COMP:10101"/>
        <dbReference type="Rhea" id="RHEA-COMP:10102"/>
        <dbReference type="ChEBI" id="CHEBI:65314"/>
        <dbReference type="ChEBI" id="CHEBI:65315"/>
        <dbReference type="EC" id="5.4.99.25"/>
    </reaction>
</comment>
<comment type="similarity">
    <text evidence="1">Belongs to the pseudouridine synthase TruB family. Type 1 subfamily.</text>
</comment>
<feature type="chain" id="PRO_0000229351" description="tRNA pseudouridine synthase B">
    <location>
        <begin position="1"/>
        <end position="308"/>
    </location>
</feature>
<feature type="active site" description="Nucleophile" evidence="1">
    <location>
        <position position="49"/>
    </location>
</feature>